<sequence length="378" mass="43027">MDIPPLAGRTVAMSFCALPVSYLLNQVSAFSQPLFVVLTSALILGLLFLAVYSLSHGEITYDPLYAVFVIFSFTSVVDLVIALQEDGYMMGFMDFYTKEGEPYLRTAHGIFICYWDGTVHYLLYLTMAGAIRKRKRYRNLGLYWLGSFAMSILVFLPGNILGKYSSEMRPTFFLAILYMLVPCWAGVRIFNQSRAPTSYTPDMVQEEQKKSLLQRPADLALIVYLIFAALFTVFRGLVVLDCPTDACFIYIYQYEPYLRDPVAYPKLQMLMYLFYALPFYCLAAYALAFPGCSWLPDWALVFAGAIGQAQFSHMGASMHMRTPFTYRVPEDTWATFFLSNLLLALGPHLLAFRCLWRPAFFLHAALPSSPQDQDKKQQ</sequence>
<protein>
    <recommendedName>
        <fullName>Transmembrane 6 superfamily member 2</fullName>
    </recommendedName>
</protein>
<accession>Q8R1J1</accession>
<accession>Q8BIG1</accession>
<name>TM6S2_MOUSE</name>
<reference key="1">
    <citation type="journal article" date="2005" name="Science">
        <title>The transcriptional landscape of the mammalian genome.</title>
        <authorList>
            <person name="Carninci P."/>
            <person name="Kasukawa T."/>
            <person name="Katayama S."/>
            <person name="Gough J."/>
            <person name="Frith M.C."/>
            <person name="Maeda N."/>
            <person name="Oyama R."/>
            <person name="Ravasi T."/>
            <person name="Lenhard B."/>
            <person name="Wells C."/>
            <person name="Kodzius R."/>
            <person name="Shimokawa K."/>
            <person name="Bajic V.B."/>
            <person name="Brenner S.E."/>
            <person name="Batalov S."/>
            <person name="Forrest A.R."/>
            <person name="Zavolan M."/>
            <person name="Davis M.J."/>
            <person name="Wilming L.G."/>
            <person name="Aidinis V."/>
            <person name="Allen J.E."/>
            <person name="Ambesi-Impiombato A."/>
            <person name="Apweiler R."/>
            <person name="Aturaliya R.N."/>
            <person name="Bailey T.L."/>
            <person name="Bansal M."/>
            <person name="Baxter L."/>
            <person name="Beisel K.W."/>
            <person name="Bersano T."/>
            <person name="Bono H."/>
            <person name="Chalk A.M."/>
            <person name="Chiu K.P."/>
            <person name="Choudhary V."/>
            <person name="Christoffels A."/>
            <person name="Clutterbuck D.R."/>
            <person name="Crowe M.L."/>
            <person name="Dalla E."/>
            <person name="Dalrymple B.P."/>
            <person name="de Bono B."/>
            <person name="Della Gatta G."/>
            <person name="di Bernardo D."/>
            <person name="Down T."/>
            <person name="Engstrom P."/>
            <person name="Fagiolini M."/>
            <person name="Faulkner G."/>
            <person name="Fletcher C.F."/>
            <person name="Fukushima T."/>
            <person name="Furuno M."/>
            <person name="Futaki S."/>
            <person name="Gariboldi M."/>
            <person name="Georgii-Hemming P."/>
            <person name="Gingeras T.R."/>
            <person name="Gojobori T."/>
            <person name="Green R.E."/>
            <person name="Gustincich S."/>
            <person name="Harbers M."/>
            <person name="Hayashi Y."/>
            <person name="Hensch T.K."/>
            <person name="Hirokawa N."/>
            <person name="Hill D."/>
            <person name="Huminiecki L."/>
            <person name="Iacono M."/>
            <person name="Ikeo K."/>
            <person name="Iwama A."/>
            <person name="Ishikawa T."/>
            <person name="Jakt M."/>
            <person name="Kanapin A."/>
            <person name="Katoh M."/>
            <person name="Kawasawa Y."/>
            <person name="Kelso J."/>
            <person name="Kitamura H."/>
            <person name="Kitano H."/>
            <person name="Kollias G."/>
            <person name="Krishnan S.P."/>
            <person name="Kruger A."/>
            <person name="Kummerfeld S.K."/>
            <person name="Kurochkin I.V."/>
            <person name="Lareau L.F."/>
            <person name="Lazarevic D."/>
            <person name="Lipovich L."/>
            <person name="Liu J."/>
            <person name="Liuni S."/>
            <person name="McWilliam S."/>
            <person name="Madan Babu M."/>
            <person name="Madera M."/>
            <person name="Marchionni L."/>
            <person name="Matsuda H."/>
            <person name="Matsuzawa S."/>
            <person name="Miki H."/>
            <person name="Mignone F."/>
            <person name="Miyake S."/>
            <person name="Morris K."/>
            <person name="Mottagui-Tabar S."/>
            <person name="Mulder N."/>
            <person name="Nakano N."/>
            <person name="Nakauchi H."/>
            <person name="Ng P."/>
            <person name="Nilsson R."/>
            <person name="Nishiguchi S."/>
            <person name="Nishikawa S."/>
            <person name="Nori F."/>
            <person name="Ohara O."/>
            <person name="Okazaki Y."/>
            <person name="Orlando V."/>
            <person name="Pang K.C."/>
            <person name="Pavan W.J."/>
            <person name="Pavesi G."/>
            <person name="Pesole G."/>
            <person name="Petrovsky N."/>
            <person name="Piazza S."/>
            <person name="Reed J."/>
            <person name="Reid J.F."/>
            <person name="Ring B.Z."/>
            <person name="Ringwald M."/>
            <person name="Rost B."/>
            <person name="Ruan Y."/>
            <person name="Salzberg S.L."/>
            <person name="Sandelin A."/>
            <person name="Schneider C."/>
            <person name="Schoenbach C."/>
            <person name="Sekiguchi K."/>
            <person name="Semple C.A."/>
            <person name="Seno S."/>
            <person name="Sessa L."/>
            <person name="Sheng Y."/>
            <person name="Shibata Y."/>
            <person name="Shimada H."/>
            <person name="Shimada K."/>
            <person name="Silva D."/>
            <person name="Sinclair B."/>
            <person name="Sperling S."/>
            <person name="Stupka E."/>
            <person name="Sugiura K."/>
            <person name="Sultana R."/>
            <person name="Takenaka Y."/>
            <person name="Taki K."/>
            <person name="Tammoja K."/>
            <person name="Tan S.L."/>
            <person name="Tang S."/>
            <person name="Taylor M.S."/>
            <person name="Tegner J."/>
            <person name="Teichmann S.A."/>
            <person name="Ueda H.R."/>
            <person name="van Nimwegen E."/>
            <person name="Verardo R."/>
            <person name="Wei C.L."/>
            <person name="Yagi K."/>
            <person name="Yamanishi H."/>
            <person name="Zabarovsky E."/>
            <person name="Zhu S."/>
            <person name="Zimmer A."/>
            <person name="Hide W."/>
            <person name="Bult C."/>
            <person name="Grimmond S.M."/>
            <person name="Teasdale R.D."/>
            <person name="Liu E.T."/>
            <person name="Brusic V."/>
            <person name="Quackenbush J."/>
            <person name="Wahlestedt C."/>
            <person name="Mattick J.S."/>
            <person name="Hume D.A."/>
            <person name="Kai C."/>
            <person name="Sasaki D."/>
            <person name="Tomaru Y."/>
            <person name="Fukuda S."/>
            <person name="Kanamori-Katayama M."/>
            <person name="Suzuki M."/>
            <person name="Aoki J."/>
            <person name="Arakawa T."/>
            <person name="Iida J."/>
            <person name="Imamura K."/>
            <person name="Itoh M."/>
            <person name="Kato T."/>
            <person name="Kawaji H."/>
            <person name="Kawagashira N."/>
            <person name="Kawashima T."/>
            <person name="Kojima M."/>
            <person name="Kondo S."/>
            <person name="Konno H."/>
            <person name="Nakano K."/>
            <person name="Ninomiya N."/>
            <person name="Nishio T."/>
            <person name="Okada M."/>
            <person name="Plessy C."/>
            <person name="Shibata K."/>
            <person name="Shiraki T."/>
            <person name="Suzuki S."/>
            <person name="Tagami M."/>
            <person name="Waki K."/>
            <person name="Watahiki A."/>
            <person name="Okamura-Oho Y."/>
            <person name="Suzuki H."/>
            <person name="Kawai J."/>
            <person name="Hayashizaki Y."/>
        </authorList>
    </citation>
    <scope>NUCLEOTIDE SEQUENCE [LARGE SCALE MRNA] (ISOFORM 2)</scope>
    <source>
        <strain>C57BL/6J</strain>
        <tissue>Testis</tissue>
    </source>
</reference>
<reference key="2">
    <citation type="journal article" date="2004" name="Genome Res.">
        <title>The status, quality, and expansion of the NIH full-length cDNA project: the Mammalian Gene Collection (MGC).</title>
        <authorList>
            <consortium name="The MGC Project Team"/>
        </authorList>
    </citation>
    <scope>NUCLEOTIDE SEQUENCE [LARGE SCALE MRNA] (ISOFORM 1)</scope>
    <source>
        <strain>FVB/N</strain>
        <tissue>Colon</tissue>
    </source>
</reference>
<reference key="3">
    <citation type="journal article" date="2014" name="Nat. Genet.">
        <title>Systematic evaluation of coding variation identifies a candidate causal variant in TM6SF2 influencing total cholesterol and myocardial infarction risk.</title>
        <authorList>
            <person name="Holmen O.L."/>
            <person name="Zhang H."/>
            <person name="Fan Y."/>
            <person name="Hovelson D.H."/>
            <person name="Schmidt E.M."/>
            <person name="Zhou W."/>
            <person name="Guo Y."/>
            <person name="Zhang J."/>
            <person name="Langhammer A."/>
            <person name="Lochen M.L."/>
            <person name="Ganesh S.K."/>
            <person name="Vatten L."/>
            <person name="Skorpen F."/>
            <person name="Dalen H."/>
            <person name="Zhang J."/>
            <person name="Pennathur S."/>
            <person name="Chen J."/>
            <person name="Platou C."/>
            <person name="Mathiesen E.B."/>
            <person name="Wilsgaard T."/>
            <person name="Njolstad I."/>
            <person name="Boehnke M."/>
            <person name="Chen Y.E."/>
            <person name="Abecasis G.R."/>
            <person name="Hveem K."/>
            <person name="Willer C.J."/>
        </authorList>
    </citation>
    <scope>TISSUE SPECIFICITY</scope>
    <scope>FUNCTION</scope>
</reference>
<reference key="4">
    <citation type="journal article" date="2014" name="Nat. Genet.">
        <title>Exome-wide association study identifies a TM6SF2 variant that confers susceptibility to nonalcoholic fatty liver disease.</title>
        <authorList>
            <person name="Kozlitina J."/>
            <person name="Smagris E."/>
            <person name="Stender S."/>
            <person name="Nordestgaard B.G."/>
            <person name="Zhou H.H."/>
            <person name="Tybjaerg-Hansen A."/>
            <person name="Vogt T.F."/>
            <person name="Hobbs H.H."/>
            <person name="Cohen J.C."/>
        </authorList>
    </citation>
    <scope>FUNCTION</scope>
</reference>
<comment type="function">
    <text evidence="1 4 5">Regulator of liver fat metabolism influencing triglyceride secretion and hepatic lipid droplet content. May function as sterol isomerase.</text>
</comment>
<comment type="subcellular location">
    <subcellularLocation>
        <location evidence="1">Endoplasmic reticulum membrane</location>
        <topology evidence="2">Multi-pass membrane protein</topology>
    </subcellularLocation>
    <subcellularLocation>
        <location evidence="1">Endoplasmic reticulum-Golgi intermediate compartment membrane</location>
        <topology evidence="2">Multi-pass membrane protein</topology>
    </subcellularLocation>
</comment>
<comment type="alternative products">
    <event type="alternative splicing"/>
    <isoform>
        <id>Q8R1J1-1</id>
        <name>1</name>
        <sequence type="displayed"/>
    </isoform>
    <isoform>
        <id>Q8R1J1-2</id>
        <name>2</name>
        <sequence type="described" ref="VSP_021806"/>
    </isoform>
</comment>
<comment type="tissue specificity">
    <text evidence="5">Highly expressed in the liver at both the mRNA and protein levels.</text>
</comment>
<comment type="similarity">
    <text evidence="7">Belongs to the TM6SF family.</text>
</comment>
<evidence type="ECO:0000250" key="1">
    <source>
        <dbReference type="UniProtKB" id="Q9BZW4"/>
    </source>
</evidence>
<evidence type="ECO:0000255" key="2"/>
<evidence type="ECO:0000255" key="3">
    <source>
        <dbReference type="PROSITE-ProRule" id="PRU01087"/>
    </source>
</evidence>
<evidence type="ECO:0000269" key="4">
    <source>
    </source>
</evidence>
<evidence type="ECO:0000269" key="5">
    <source>
    </source>
</evidence>
<evidence type="ECO:0000303" key="6">
    <source>
    </source>
</evidence>
<evidence type="ECO:0000305" key="7"/>
<dbReference type="EMBL" id="AK077126">
    <property type="protein sequence ID" value="BAC36629.1"/>
    <property type="molecule type" value="mRNA"/>
</dbReference>
<dbReference type="EMBL" id="BC024498">
    <property type="protein sequence ID" value="AAH24498.1"/>
    <property type="molecule type" value="mRNA"/>
</dbReference>
<dbReference type="CCDS" id="CCDS22357.1">
    <molecule id="Q8R1J1-2"/>
</dbReference>
<dbReference type="CCDS" id="CCDS80889.1">
    <molecule id="Q8R1J1-1"/>
</dbReference>
<dbReference type="RefSeq" id="NP_853518.1">
    <property type="nucleotide sequence ID" value="NM_181540.4"/>
</dbReference>
<dbReference type="FunCoup" id="Q8R1J1">
    <property type="interactions" value="99"/>
</dbReference>
<dbReference type="STRING" id="10090.ENSMUSP00000105788"/>
<dbReference type="PaxDb" id="10090-ENSMUSP00000046114"/>
<dbReference type="ProteomicsDB" id="259565">
    <molecule id="Q8R1J1-1"/>
</dbReference>
<dbReference type="ProteomicsDB" id="259566">
    <molecule id="Q8R1J1-2"/>
</dbReference>
<dbReference type="DNASU" id="107770"/>
<dbReference type="GeneID" id="107770"/>
<dbReference type="KEGG" id="mmu:107770"/>
<dbReference type="AGR" id="MGI:1933210"/>
<dbReference type="CTD" id="53345"/>
<dbReference type="MGI" id="MGI:1933210">
    <property type="gene designation" value="Tm6sf2"/>
</dbReference>
<dbReference type="eggNOG" id="ENOG502QRB2">
    <property type="taxonomic scope" value="Eukaryota"/>
</dbReference>
<dbReference type="InParanoid" id="Q8R1J1"/>
<dbReference type="OrthoDB" id="8181520at2759"/>
<dbReference type="PhylomeDB" id="Q8R1J1"/>
<dbReference type="TreeFam" id="TF333088"/>
<dbReference type="BioGRID-ORCS" id="107770">
    <property type="hits" value="3 hits in 76 CRISPR screens"/>
</dbReference>
<dbReference type="PRO" id="PR:Q8R1J1"/>
<dbReference type="Proteomes" id="UP000000589">
    <property type="component" value="Unplaced"/>
</dbReference>
<dbReference type="RNAct" id="Q8R1J1">
    <property type="molecule type" value="protein"/>
</dbReference>
<dbReference type="GO" id="GO:0005789">
    <property type="term" value="C:endoplasmic reticulum membrane"/>
    <property type="evidence" value="ECO:0000250"/>
    <property type="project" value="UniProtKB"/>
</dbReference>
<dbReference type="GO" id="GO:0033116">
    <property type="term" value="C:endoplasmic reticulum-Golgi intermediate compartment membrane"/>
    <property type="evidence" value="ECO:0000250"/>
    <property type="project" value="UniProtKB"/>
</dbReference>
<dbReference type="GO" id="GO:0019216">
    <property type="term" value="P:regulation of lipid metabolic process"/>
    <property type="evidence" value="ECO:0000250"/>
    <property type="project" value="UniProtKB"/>
</dbReference>
<dbReference type="CDD" id="cd21106">
    <property type="entry name" value="TM6SF1-like"/>
    <property type="match status" value="1"/>
</dbReference>
<dbReference type="InterPro" id="IPR033118">
    <property type="entry name" value="EXPERA"/>
</dbReference>
<dbReference type="InterPro" id="IPR047195">
    <property type="entry name" value="TM6SF1-like"/>
</dbReference>
<dbReference type="PANTHER" id="PTHR14568:SF9">
    <property type="entry name" value="TRANSMEMBRANE 6 SUPERFAMILY MEMBER 2"/>
    <property type="match status" value="1"/>
</dbReference>
<dbReference type="PANTHER" id="PTHR14568">
    <property type="entry name" value="TRANSMEMBRANE SUPERFAMILY 6 MEMBER 1/2"/>
    <property type="match status" value="1"/>
</dbReference>
<dbReference type="Pfam" id="PF05241">
    <property type="entry name" value="EBP"/>
    <property type="match status" value="1"/>
</dbReference>
<dbReference type="PROSITE" id="PS51751">
    <property type="entry name" value="EXPERA"/>
    <property type="match status" value="2"/>
</dbReference>
<organism>
    <name type="scientific">Mus musculus</name>
    <name type="common">Mouse</name>
    <dbReference type="NCBI Taxonomy" id="10090"/>
    <lineage>
        <taxon>Eukaryota</taxon>
        <taxon>Metazoa</taxon>
        <taxon>Chordata</taxon>
        <taxon>Craniata</taxon>
        <taxon>Vertebrata</taxon>
        <taxon>Euteleostomi</taxon>
        <taxon>Mammalia</taxon>
        <taxon>Eutheria</taxon>
        <taxon>Euarchontoglires</taxon>
        <taxon>Glires</taxon>
        <taxon>Rodentia</taxon>
        <taxon>Myomorpha</taxon>
        <taxon>Muroidea</taxon>
        <taxon>Muridae</taxon>
        <taxon>Murinae</taxon>
        <taxon>Mus</taxon>
        <taxon>Mus</taxon>
    </lineage>
</organism>
<keyword id="KW-0025">Alternative splicing</keyword>
<keyword id="KW-0256">Endoplasmic reticulum</keyword>
<keyword id="KW-0472">Membrane</keyword>
<keyword id="KW-1185">Reference proteome</keyword>
<keyword id="KW-0677">Repeat</keyword>
<keyword id="KW-0812">Transmembrane</keyword>
<keyword id="KW-1133">Transmembrane helix</keyword>
<proteinExistence type="evidence at transcript level"/>
<feature type="chain" id="PRO_0000262719" description="Transmembrane 6 superfamily member 2">
    <location>
        <begin position="1"/>
        <end position="378"/>
    </location>
</feature>
<feature type="transmembrane region" description="Helical; Name=1" evidence="2">
    <location>
        <begin position="10"/>
        <end position="30"/>
    </location>
</feature>
<feature type="transmembrane region" description="Helical; Name=2" evidence="2">
    <location>
        <begin position="34"/>
        <end position="54"/>
    </location>
</feature>
<feature type="transmembrane region" description="Helical; Name=3" evidence="2">
    <location>
        <begin position="63"/>
        <end position="83"/>
    </location>
</feature>
<feature type="transmembrane region" description="Helical; Name=4" evidence="2">
    <location>
        <begin position="110"/>
        <end position="130"/>
    </location>
</feature>
<feature type="transmembrane region" description="Helical; Name=5" evidence="2">
    <location>
        <begin position="140"/>
        <end position="160"/>
    </location>
</feature>
<feature type="transmembrane region" description="Helical; Name=6" evidence="2">
    <location>
        <begin position="170"/>
        <end position="190"/>
    </location>
</feature>
<feature type="transmembrane region" description="Helical; Name=7" evidence="2">
    <location>
        <begin position="219"/>
        <end position="239"/>
    </location>
</feature>
<feature type="transmembrane region" description="Helical; Name=8" evidence="2">
    <location>
        <begin position="269"/>
        <end position="289"/>
    </location>
</feature>
<feature type="transmembrane region" description="Helical; Name=9" evidence="2">
    <location>
        <begin position="291"/>
        <end position="311"/>
    </location>
</feature>
<feature type="transmembrane region" description="Helical; Name=10" evidence="2">
    <location>
        <begin position="332"/>
        <end position="352"/>
    </location>
</feature>
<feature type="domain" description="EXPERA 1" evidence="3">
    <location>
        <begin position="61"/>
        <end position="186"/>
    </location>
</feature>
<feature type="domain" description="EXPERA 2" evidence="3">
    <location>
        <begin position="217"/>
        <end position="351"/>
    </location>
</feature>
<feature type="splice variant" id="VSP_021806" description="In isoform 2." evidence="6">
    <location>
        <begin position="205"/>
        <end position="206"/>
    </location>
</feature>
<feature type="sequence conflict" description="In Ref. 2; AAH24498." evidence="7" ref="2">
    <original>R</original>
    <variation>Q</variation>
    <location>
        <position position="194"/>
    </location>
</feature>
<feature type="sequence conflict" description="In Ref. 1; BAC36629." evidence="7" ref="1">
    <original>L</original>
    <variation>F</variation>
    <location>
        <position position="213"/>
    </location>
</feature>
<gene>
    <name type="primary">Tm6sf2</name>
</gene>